<proteinExistence type="inferred from homology"/>
<evidence type="ECO:0000255" key="1">
    <source>
        <dbReference type="HAMAP-Rule" id="MF_01232"/>
    </source>
</evidence>
<evidence type="ECO:0000256" key="2">
    <source>
        <dbReference type="SAM" id="MobiDB-lite"/>
    </source>
</evidence>
<organism>
    <name type="scientific">Clostridium acetobutylicum (strain ATCC 824 / DSM 792 / JCM 1419 / IAM 19013 / LMG 5710 / NBRC 13948 / NRRL B-527 / VKM B-1787 / 2291 / W)</name>
    <dbReference type="NCBI Taxonomy" id="272562"/>
    <lineage>
        <taxon>Bacteria</taxon>
        <taxon>Bacillati</taxon>
        <taxon>Bacillota</taxon>
        <taxon>Clostridia</taxon>
        <taxon>Eubacteriales</taxon>
        <taxon>Clostridiaceae</taxon>
        <taxon>Clostridium</taxon>
    </lineage>
</organism>
<name>Y580_CLOAB</name>
<reference key="1">
    <citation type="journal article" date="2001" name="J. Bacteriol.">
        <title>Genome sequence and comparative analysis of the solvent-producing bacterium Clostridium acetobutylicum.</title>
        <authorList>
            <person name="Noelling J."/>
            <person name="Breton G."/>
            <person name="Omelchenko M.V."/>
            <person name="Makarova K.S."/>
            <person name="Zeng Q."/>
            <person name="Gibson R."/>
            <person name="Lee H.M."/>
            <person name="Dubois J."/>
            <person name="Qiu D."/>
            <person name="Hitti J."/>
            <person name="Wolf Y.I."/>
            <person name="Tatusov R.L."/>
            <person name="Sabathe F."/>
            <person name="Doucette-Stamm L.A."/>
            <person name="Soucaille P."/>
            <person name="Daly M.J."/>
            <person name="Bennett G.N."/>
            <person name="Koonin E.V."/>
            <person name="Smith D.R."/>
        </authorList>
    </citation>
    <scope>NUCLEOTIDE SEQUENCE [LARGE SCALE GENOMIC DNA]</scope>
    <source>
        <strain>ATCC 824 / DSM 792 / JCM 1419 / IAM 19013 / LMG 5710 / NBRC 13948 / NRRL B-527 / VKM B-1787 / 2291 / W</strain>
    </source>
</reference>
<protein>
    <recommendedName>
        <fullName evidence="1">UPF0229 protein CA_C0580</fullName>
    </recommendedName>
</protein>
<keyword id="KW-1185">Reference proteome</keyword>
<accession>Q97LI1</accession>
<comment type="similarity">
    <text evidence="1">Belongs to the UPF0229 family.</text>
</comment>
<gene>
    <name type="ordered locus">CA_C0580</name>
</gene>
<dbReference type="EMBL" id="AE001437">
    <property type="protein sequence ID" value="AAK78558.1"/>
    <property type="molecule type" value="Genomic_DNA"/>
</dbReference>
<dbReference type="PIR" id="C96971">
    <property type="entry name" value="C96971"/>
</dbReference>
<dbReference type="RefSeq" id="NP_347218.1">
    <property type="nucleotide sequence ID" value="NC_003030.1"/>
</dbReference>
<dbReference type="SMR" id="Q97LI1"/>
<dbReference type="STRING" id="272562.CA_C0580"/>
<dbReference type="KEGG" id="cac:CA_C0580"/>
<dbReference type="PATRIC" id="fig|272562.8.peg.783"/>
<dbReference type="eggNOG" id="COG2718">
    <property type="taxonomic scope" value="Bacteria"/>
</dbReference>
<dbReference type="HOGENOM" id="CLU_049702_2_0_9"/>
<dbReference type="OrthoDB" id="9788289at2"/>
<dbReference type="Proteomes" id="UP000000814">
    <property type="component" value="Chromosome"/>
</dbReference>
<dbReference type="CDD" id="cd00198">
    <property type="entry name" value="vWFA"/>
    <property type="match status" value="1"/>
</dbReference>
<dbReference type="Gene3D" id="3.40.50.410">
    <property type="entry name" value="von Willebrand factor, type A domain"/>
    <property type="match status" value="1"/>
</dbReference>
<dbReference type="HAMAP" id="MF_01232">
    <property type="entry name" value="UPF0229"/>
    <property type="match status" value="1"/>
</dbReference>
<dbReference type="InterPro" id="IPR014230">
    <property type="entry name" value="Spore_YhbH"/>
</dbReference>
<dbReference type="InterPro" id="IPR006698">
    <property type="entry name" value="UPF0229"/>
</dbReference>
<dbReference type="InterPro" id="IPR036465">
    <property type="entry name" value="vWFA_dom_sf"/>
</dbReference>
<dbReference type="NCBIfam" id="TIGR02877">
    <property type="entry name" value="spore_yhbH"/>
    <property type="match status" value="1"/>
</dbReference>
<dbReference type="PANTHER" id="PTHR30510">
    <property type="entry name" value="UPF0229 PROTEIN YEAH"/>
    <property type="match status" value="1"/>
</dbReference>
<dbReference type="PANTHER" id="PTHR30510:SF2">
    <property type="entry name" value="UPF0229 PROTEIN YEAH"/>
    <property type="match status" value="1"/>
</dbReference>
<dbReference type="Pfam" id="PF04285">
    <property type="entry name" value="DUF444"/>
    <property type="match status" value="2"/>
</dbReference>
<dbReference type="SUPFAM" id="SSF53300">
    <property type="entry name" value="vWA-like"/>
    <property type="match status" value="1"/>
</dbReference>
<feature type="chain" id="PRO_0000068193" description="UPF0229 protein CA_C0580">
    <location>
        <begin position="1"/>
        <end position="391"/>
    </location>
</feature>
<feature type="region of interest" description="Disordered" evidence="2">
    <location>
        <begin position="1"/>
        <end position="20"/>
    </location>
</feature>
<feature type="region of interest" description="Disordered" evidence="2">
    <location>
        <begin position="75"/>
        <end position="109"/>
    </location>
</feature>
<feature type="compositionally biased region" description="Gly residues" evidence="2">
    <location>
        <begin position="96"/>
        <end position="106"/>
    </location>
</feature>
<sequence>MAIFRDYSINPTEHDRTIGDRRRHRELVEKAIKDNLADIVSEESIIGESKSKKIKIPIRGLKEYKFLYGNNSSSVGSGTGNEKKGDIIGKEQMGNGSKGKGKGAGNSEGEDIYETEVTIEEVFSYLLEDLNLPNLDKKKYSEIVTDSSKKKAGYQKYGIRPRLAKKRTVIEKIKREQSRKRAIKELGKDDKVERLPFSEEDLRYHRIKEKPKKECNAAIMCVMDCSGSMDSTKKYLARSFFFILSKFIRMKYVNVEIAFISHSTVGREVTETEFFHKVESGGTYISSGLNTAMDIIKERFNPATWNIYGFYVSDGDNFTEDDERAIKSMRKFCEIANMIGYAEILPYSYSGTMKYKFDNYVKDKNFISSTIRNKEDLWPVLKKMLIKELKE</sequence>